<gene>
    <name evidence="1" type="primary">petG</name>
</gene>
<name>PETG_GOSHI</name>
<protein>
    <recommendedName>
        <fullName evidence="1">Cytochrome b6-f complex subunit 5</fullName>
    </recommendedName>
    <alternativeName>
        <fullName evidence="1">Cytochrome b6-f complex subunit PetG</fullName>
    </alternativeName>
    <alternativeName>
        <fullName evidence="1">Cytochrome b6-f complex subunit V</fullName>
    </alternativeName>
</protein>
<proteinExistence type="inferred from homology"/>
<keyword id="KW-0150">Chloroplast</keyword>
<keyword id="KW-0249">Electron transport</keyword>
<keyword id="KW-0472">Membrane</keyword>
<keyword id="KW-0602">Photosynthesis</keyword>
<keyword id="KW-0934">Plastid</keyword>
<keyword id="KW-1185">Reference proteome</keyword>
<keyword id="KW-0793">Thylakoid</keyword>
<keyword id="KW-0812">Transmembrane</keyword>
<keyword id="KW-1133">Transmembrane helix</keyword>
<keyword id="KW-0813">Transport</keyword>
<evidence type="ECO:0000255" key="1">
    <source>
        <dbReference type="HAMAP-Rule" id="MF_00432"/>
    </source>
</evidence>
<reference key="1">
    <citation type="journal article" date="2006" name="BMC Genomics">
        <title>The complete chloroplast genome sequence of Gossypium hirsutum: organization and phylogenetic relationships to other angiosperms.</title>
        <authorList>
            <person name="Lee S.-B."/>
            <person name="Kaittanis C."/>
            <person name="Jansen R.K."/>
            <person name="Hostetler J.B."/>
            <person name="Tallon L.J."/>
            <person name="Town C.D."/>
            <person name="Daniell H."/>
        </authorList>
    </citation>
    <scope>NUCLEOTIDE SEQUENCE [LARGE SCALE GENOMIC DNA]</scope>
    <source>
        <strain>cv. Coker 310FR</strain>
    </source>
</reference>
<dbReference type="EMBL" id="DQ345959">
    <property type="protein sequence ID" value="ABC73647.1"/>
    <property type="molecule type" value="Genomic_DNA"/>
</dbReference>
<dbReference type="RefSeq" id="YP_538954.1">
    <property type="nucleotide sequence ID" value="NC_007944.1"/>
</dbReference>
<dbReference type="SMR" id="Q2L923"/>
<dbReference type="GeneID" id="3989122"/>
<dbReference type="KEGG" id="ghi:3989122"/>
<dbReference type="OrthoDB" id="29866at41938"/>
<dbReference type="Proteomes" id="UP000189702">
    <property type="component" value="Chloroplast Pltd"/>
</dbReference>
<dbReference type="GO" id="GO:0009535">
    <property type="term" value="C:chloroplast thylakoid membrane"/>
    <property type="evidence" value="ECO:0007669"/>
    <property type="project" value="UniProtKB-SubCell"/>
</dbReference>
<dbReference type="GO" id="GO:0009512">
    <property type="term" value="C:cytochrome b6f complex"/>
    <property type="evidence" value="ECO:0007669"/>
    <property type="project" value="InterPro"/>
</dbReference>
<dbReference type="GO" id="GO:0045158">
    <property type="term" value="F:electron transporter, transferring electrons within cytochrome b6/f complex of photosystem II activity"/>
    <property type="evidence" value="ECO:0007669"/>
    <property type="project" value="UniProtKB-UniRule"/>
</dbReference>
<dbReference type="GO" id="GO:0017004">
    <property type="term" value="P:cytochrome complex assembly"/>
    <property type="evidence" value="ECO:0007669"/>
    <property type="project" value="UniProtKB-UniRule"/>
</dbReference>
<dbReference type="GO" id="GO:0015979">
    <property type="term" value="P:photosynthesis"/>
    <property type="evidence" value="ECO:0007669"/>
    <property type="project" value="UniProtKB-KW"/>
</dbReference>
<dbReference type="HAMAP" id="MF_00432">
    <property type="entry name" value="Cytb6_f_PetG"/>
    <property type="match status" value="1"/>
</dbReference>
<dbReference type="InterPro" id="IPR003683">
    <property type="entry name" value="Cyt_6/f_cplx_su5"/>
</dbReference>
<dbReference type="InterPro" id="IPR036099">
    <property type="entry name" value="Cyt_6/f_cplx_su5_sf"/>
</dbReference>
<dbReference type="NCBIfam" id="NF001907">
    <property type="entry name" value="PRK00665.1"/>
    <property type="match status" value="1"/>
</dbReference>
<dbReference type="Pfam" id="PF02529">
    <property type="entry name" value="PetG"/>
    <property type="match status" value="1"/>
</dbReference>
<dbReference type="PIRSF" id="PIRSF000034">
    <property type="entry name" value="Cyt_b6-f_V"/>
    <property type="match status" value="1"/>
</dbReference>
<dbReference type="SUPFAM" id="SSF103446">
    <property type="entry name" value="PetG subunit of the cytochrome b6f complex"/>
    <property type="match status" value="1"/>
</dbReference>
<accession>Q2L923</accession>
<organism>
    <name type="scientific">Gossypium hirsutum</name>
    <name type="common">Upland cotton</name>
    <name type="synonym">Gossypium mexicanum</name>
    <dbReference type="NCBI Taxonomy" id="3635"/>
    <lineage>
        <taxon>Eukaryota</taxon>
        <taxon>Viridiplantae</taxon>
        <taxon>Streptophyta</taxon>
        <taxon>Embryophyta</taxon>
        <taxon>Tracheophyta</taxon>
        <taxon>Spermatophyta</taxon>
        <taxon>Magnoliopsida</taxon>
        <taxon>eudicotyledons</taxon>
        <taxon>Gunneridae</taxon>
        <taxon>Pentapetalae</taxon>
        <taxon>rosids</taxon>
        <taxon>malvids</taxon>
        <taxon>Malvales</taxon>
        <taxon>Malvaceae</taxon>
        <taxon>Malvoideae</taxon>
        <taxon>Gossypium</taxon>
    </lineage>
</organism>
<comment type="function">
    <text evidence="1">Component of the cytochrome b6-f complex, which mediates electron transfer between photosystem II (PSII) and photosystem I (PSI), cyclic electron flow around PSI, and state transitions. PetG is required for either the stability or assembly of the cytochrome b6-f complex.</text>
</comment>
<comment type="subunit">
    <text evidence="1">The 4 large subunits of the cytochrome b6-f complex are cytochrome b6, subunit IV (17 kDa polypeptide, PetD), cytochrome f and the Rieske protein, while the 4 small subunits are PetG, PetL, PetM and PetN. The complex functions as a dimer.</text>
</comment>
<comment type="subcellular location">
    <subcellularLocation>
        <location evidence="1">Plastid</location>
        <location evidence="1">Chloroplast thylakoid membrane</location>
        <topology evidence="1">Single-pass membrane protein</topology>
    </subcellularLocation>
</comment>
<comment type="similarity">
    <text evidence="1">Belongs to the PetG family.</text>
</comment>
<sequence length="37" mass="4170">MIEVFLFGIVLGLIPITLAGLFVTAYLQYRRGDQLDL</sequence>
<geneLocation type="chloroplast"/>
<feature type="chain" id="PRO_0000275491" description="Cytochrome b6-f complex subunit 5">
    <location>
        <begin position="1"/>
        <end position="37"/>
    </location>
</feature>
<feature type="transmembrane region" description="Helical" evidence="1">
    <location>
        <begin position="5"/>
        <end position="25"/>
    </location>
</feature>